<evidence type="ECO:0000255" key="1">
    <source>
        <dbReference type="HAMAP-Rule" id="MF_00639"/>
    </source>
</evidence>
<proteinExistence type="inferred from homology"/>
<accession>Q1C212</accession>
<comment type="function">
    <text evidence="1">Cell wall formation. Catalyzes the addition of glutamate to the nucleotide precursor UDP-N-acetylmuramoyl-L-alanine (UMA).</text>
</comment>
<comment type="catalytic activity">
    <reaction evidence="1">
        <text>UDP-N-acetyl-alpha-D-muramoyl-L-alanine + D-glutamate + ATP = UDP-N-acetyl-alpha-D-muramoyl-L-alanyl-D-glutamate + ADP + phosphate + H(+)</text>
        <dbReference type="Rhea" id="RHEA:16429"/>
        <dbReference type="ChEBI" id="CHEBI:15378"/>
        <dbReference type="ChEBI" id="CHEBI:29986"/>
        <dbReference type="ChEBI" id="CHEBI:30616"/>
        <dbReference type="ChEBI" id="CHEBI:43474"/>
        <dbReference type="ChEBI" id="CHEBI:83898"/>
        <dbReference type="ChEBI" id="CHEBI:83900"/>
        <dbReference type="ChEBI" id="CHEBI:456216"/>
        <dbReference type="EC" id="6.3.2.9"/>
    </reaction>
</comment>
<comment type="pathway">
    <text evidence="1">Cell wall biogenesis; peptidoglycan biosynthesis.</text>
</comment>
<comment type="subcellular location">
    <subcellularLocation>
        <location evidence="1">Cytoplasm</location>
    </subcellularLocation>
</comment>
<comment type="similarity">
    <text evidence="1">Belongs to the MurCDEF family.</text>
</comment>
<name>MURD_YERPA</name>
<organism>
    <name type="scientific">Yersinia pestis bv. Antiqua (strain Antiqua)</name>
    <dbReference type="NCBI Taxonomy" id="360102"/>
    <lineage>
        <taxon>Bacteria</taxon>
        <taxon>Pseudomonadati</taxon>
        <taxon>Pseudomonadota</taxon>
        <taxon>Gammaproteobacteria</taxon>
        <taxon>Enterobacterales</taxon>
        <taxon>Yersiniaceae</taxon>
        <taxon>Yersinia</taxon>
    </lineage>
</organism>
<reference key="1">
    <citation type="journal article" date="2006" name="J. Bacteriol.">
        <title>Complete genome sequence of Yersinia pestis strains Antiqua and Nepal516: evidence of gene reduction in an emerging pathogen.</title>
        <authorList>
            <person name="Chain P.S.G."/>
            <person name="Hu P."/>
            <person name="Malfatti S.A."/>
            <person name="Radnedge L."/>
            <person name="Larimer F."/>
            <person name="Vergez L.M."/>
            <person name="Worsham P."/>
            <person name="Chu M.C."/>
            <person name="Andersen G.L."/>
        </authorList>
    </citation>
    <scope>NUCLEOTIDE SEQUENCE [LARGE SCALE GENOMIC DNA]</scope>
    <source>
        <strain>Antiqua</strain>
    </source>
</reference>
<gene>
    <name evidence="1" type="primary">murD</name>
    <name type="ordered locus">YPA_3548</name>
</gene>
<sequence>MVDYQGKKVVIIGLGLTGLSCVDFFIARGVTPRVMDTRINPPGLDQLPESVEQHVGDLNQEWLLDADLIVVSPGMALAHPALSEAAEAGVEIIGDIELFCRENQAPVVAITGSNGKSTVTTLVGEMAKAAGWSVGGGGNIGVPALTLLKQDNQLTVLELSSFQLETTHSLRASAATILNVTEDHTDRYPLGLQQYRAAKLRVYENAKVCVVNADDALTMPVRGADSRCISFGVDVGDYHLNKQQGEIWLRVRGEKVLNTREMKLSGRHNYTNALAALALADAVGIPRASSLKALTTFSGLPHRFQLVLERHGVRWINDSKATNVGSTEAALDGLQVDGTLHLLLGGDGKSADFSGLTHFLQGDRIKVYCFGRDGGQLAALRPDVSQLTETMAQAMALVAKVVLPGDRVLLSPACASLDQFRSFEHRGNEFARLAEELG</sequence>
<protein>
    <recommendedName>
        <fullName evidence="1">UDP-N-acetylmuramoylalanine--D-glutamate ligase</fullName>
        <ecNumber evidence="1">6.3.2.9</ecNumber>
    </recommendedName>
    <alternativeName>
        <fullName evidence="1">D-glutamic acid-adding enzyme</fullName>
    </alternativeName>
    <alternativeName>
        <fullName evidence="1">UDP-N-acetylmuramoyl-L-alanyl-D-glutamate synthetase</fullName>
    </alternativeName>
</protein>
<keyword id="KW-0067">ATP-binding</keyword>
<keyword id="KW-0131">Cell cycle</keyword>
<keyword id="KW-0132">Cell division</keyword>
<keyword id="KW-0133">Cell shape</keyword>
<keyword id="KW-0961">Cell wall biogenesis/degradation</keyword>
<keyword id="KW-0963">Cytoplasm</keyword>
<keyword id="KW-0436">Ligase</keyword>
<keyword id="KW-0547">Nucleotide-binding</keyword>
<keyword id="KW-0573">Peptidoglycan synthesis</keyword>
<dbReference type="EC" id="6.3.2.9" evidence="1"/>
<dbReference type="EMBL" id="CP000308">
    <property type="protein sequence ID" value="ABG15510.1"/>
    <property type="molecule type" value="Genomic_DNA"/>
</dbReference>
<dbReference type="RefSeq" id="WP_002210436.1">
    <property type="nucleotide sequence ID" value="NZ_CP009906.1"/>
</dbReference>
<dbReference type="SMR" id="Q1C212"/>
<dbReference type="GeneID" id="57974062"/>
<dbReference type="KEGG" id="ypa:YPA_3548"/>
<dbReference type="UniPathway" id="UPA00219"/>
<dbReference type="Proteomes" id="UP000001971">
    <property type="component" value="Chromosome"/>
</dbReference>
<dbReference type="GO" id="GO:0005737">
    <property type="term" value="C:cytoplasm"/>
    <property type="evidence" value="ECO:0007669"/>
    <property type="project" value="UniProtKB-SubCell"/>
</dbReference>
<dbReference type="GO" id="GO:0005524">
    <property type="term" value="F:ATP binding"/>
    <property type="evidence" value="ECO:0007669"/>
    <property type="project" value="UniProtKB-UniRule"/>
</dbReference>
<dbReference type="GO" id="GO:0008764">
    <property type="term" value="F:UDP-N-acetylmuramoylalanine-D-glutamate ligase activity"/>
    <property type="evidence" value="ECO:0007669"/>
    <property type="project" value="UniProtKB-UniRule"/>
</dbReference>
<dbReference type="GO" id="GO:0051301">
    <property type="term" value="P:cell division"/>
    <property type="evidence" value="ECO:0007669"/>
    <property type="project" value="UniProtKB-KW"/>
</dbReference>
<dbReference type="GO" id="GO:0071555">
    <property type="term" value="P:cell wall organization"/>
    <property type="evidence" value="ECO:0007669"/>
    <property type="project" value="UniProtKB-KW"/>
</dbReference>
<dbReference type="GO" id="GO:0009252">
    <property type="term" value="P:peptidoglycan biosynthetic process"/>
    <property type="evidence" value="ECO:0007669"/>
    <property type="project" value="UniProtKB-UniRule"/>
</dbReference>
<dbReference type="GO" id="GO:0008360">
    <property type="term" value="P:regulation of cell shape"/>
    <property type="evidence" value="ECO:0007669"/>
    <property type="project" value="UniProtKB-KW"/>
</dbReference>
<dbReference type="FunFam" id="3.40.1190.10:FF:000002">
    <property type="entry name" value="UDP-N-acetylmuramoylalanine--D-glutamate ligase"/>
    <property type="match status" value="1"/>
</dbReference>
<dbReference type="Gene3D" id="3.90.190.20">
    <property type="entry name" value="Mur ligase, C-terminal domain"/>
    <property type="match status" value="1"/>
</dbReference>
<dbReference type="Gene3D" id="3.40.1190.10">
    <property type="entry name" value="Mur-like, catalytic domain"/>
    <property type="match status" value="1"/>
</dbReference>
<dbReference type="Gene3D" id="3.40.50.720">
    <property type="entry name" value="NAD(P)-binding Rossmann-like Domain"/>
    <property type="match status" value="1"/>
</dbReference>
<dbReference type="HAMAP" id="MF_00639">
    <property type="entry name" value="MurD"/>
    <property type="match status" value="1"/>
</dbReference>
<dbReference type="InterPro" id="IPR036565">
    <property type="entry name" value="Mur-like_cat_sf"/>
</dbReference>
<dbReference type="InterPro" id="IPR004101">
    <property type="entry name" value="Mur_ligase_C"/>
</dbReference>
<dbReference type="InterPro" id="IPR036615">
    <property type="entry name" value="Mur_ligase_C_dom_sf"/>
</dbReference>
<dbReference type="InterPro" id="IPR013221">
    <property type="entry name" value="Mur_ligase_cen"/>
</dbReference>
<dbReference type="InterPro" id="IPR005762">
    <property type="entry name" value="MurD"/>
</dbReference>
<dbReference type="NCBIfam" id="TIGR01087">
    <property type="entry name" value="murD"/>
    <property type="match status" value="1"/>
</dbReference>
<dbReference type="PANTHER" id="PTHR43692">
    <property type="entry name" value="UDP-N-ACETYLMURAMOYLALANINE--D-GLUTAMATE LIGASE"/>
    <property type="match status" value="1"/>
</dbReference>
<dbReference type="PANTHER" id="PTHR43692:SF1">
    <property type="entry name" value="UDP-N-ACETYLMURAMOYLALANINE--D-GLUTAMATE LIGASE"/>
    <property type="match status" value="1"/>
</dbReference>
<dbReference type="Pfam" id="PF02875">
    <property type="entry name" value="Mur_ligase_C"/>
    <property type="match status" value="1"/>
</dbReference>
<dbReference type="Pfam" id="PF08245">
    <property type="entry name" value="Mur_ligase_M"/>
    <property type="match status" value="1"/>
</dbReference>
<dbReference type="Pfam" id="PF21799">
    <property type="entry name" value="MurD-like_N"/>
    <property type="match status" value="1"/>
</dbReference>
<dbReference type="SUPFAM" id="SSF51984">
    <property type="entry name" value="MurCD N-terminal domain"/>
    <property type="match status" value="1"/>
</dbReference>
<dbReference type="SUPFAM" id="SSF53623">
    <property type="entry name" value="MurD-like peptide ligases, catalytic domain"/>
    <property type="match status" value="1"/>
</dbReference>
<dbReference type="SUPFAM" id="SSF53244">
    <property type="entry name" value="MurD-like peptide ligases, peptide-binding domain"/>
    <property type="match status" value="1"/>
</dbReference>
<feature type="chain" id="PRO_0000257264" description="UDP-N-acetylmuramoylalanine--D-glutamate ligase">
    <location>
        <begin position="1"/>
        <end position="438"/>
    </location>
</feature>
<feature type="binding site" evidence="1">
    <location>
        <begin position="112"/>
        <end position="118"/>
    </location>
    <ligand>
        <name>ATP</name>
        <dbReference type="ChEBI" id="CHEBI:30616"/>
    </ligand>
</feature>